<feature type="initiator methionine" description="Removed" evidence="1">
    <location>
        <position position="1"/>
    </location>
</feature>
<feature type="chain" id="PRO_1000008720" description="Formamidopyrimidine-DNA glycosylase">
    <location>
        <begin position="2"/>
        <end position="296"/>
    </location>
</feature>
<feature type="zinc finger region" description="FPG-type" evidence="2">
    <location>
        <begin position="255"/>
        <end position="289"/>
    </location>
</feature>
<feature type="active site" description="Schiff-base intermediate with DNA" evidence="2">
    <location>
        <position position="2"/>
    </location>
</feature>
<feature type="active site" description="Proton donor" evidence="2">
    <location>
        <position position="3"/>
    </location>
</feature>
<feature type="active site" description="Proton donor; for beta-elimination activity" evidence="2">
    <location>
        <position position="61"/>
    </location>
</feature>
<feature type="active site" description="Proton donor; for delta-elimination activity" evidence="2">
    <location>
        <position position="279"/>
    </location>
</feature>
<feature type="binding site" evidence="2">
    <location>
        <position position="104"/>
    </location>
    <ligand>
        <name>DNA</name>
        <dbReference type="ChEBI" id="CHEBI:16991"/>
    </ligand>
</feature>
<feature type="binding site" evidence="2">
    <location>
        <position position="123"/>
    </location>
    <ligand>
        <name>DNA</name>
        <dbReference type="ChEBI" id="CHEBI:16991"/>
    </ligand>
</feature>
<feature type="binding site" evidence="2">
    <location>
        <position position="169"/>
    </location>
    <ligand>
        <name>DNA</name>
        <dbReference type="ChEBI" id="CHEBI:16991"/>
    </ligand>
</feature>
<sequence>MPELPEVEVVRRGLDAHVTGKAITAVRVHHPRAVRRHEAGPADLTARLLGMRITGTGRRGKYLWLTLDGGDEPLARRAESSVALVVHLGMSGQMLLGPIPKEDHLRIAALLDDGTALSFVDQRTFGGWLLADLVTVDGTDVPVPVAHVARDPLDPRFDRDAVVKVLRGKHSEIKRQLLDQTVVSGIGNIYADEALWRAKVNGARLAESLTKPKLAEILDHAADVMRDALGQGGTSFDSLYVNVNGESGYFDRSLDAYGREGEPCRRCGAIMRREKFMNRSSFYCPRCQPRPRVRRA</sequence>
<gene>
    <name evidence="2" type="primary">mutM</name>
    <name evidence="2" type="synonym">fpg</name>
    <name type="ordered locus">Mjls_1930</name>
</gene>
<reference key="1">
    <citation type="submission" date="2007-02" db="EMBL/GenBank/DDBJ databases">
        <title>Complete sequence of Mycobacterium sp. JLS.</title>
        <authorList>
            <consortium name="US DOE Joint Genome Institute"/>
            <person name="Copeland A."/>
            <person name="Lucas S."/>
            <person name="Lapidus A."/>
            <person name="Barry K."/>
            <person name="Detter J.C."/>
            <person name="Glavina del Rio T."/>
            <person name="Hammon N."/>
            <person name="Israni S."/>
            <person name="Dalin E."/>
            <person name="Tice H."/>
            <person name="Pitluck S."/>
            <person name="Chain P."/>
            <person name="Malfatti S."/>
            <person name="Shin M."/>
            <person name="Vergez L."/>
            <person name="Schmutz J."/>
            <person name="Larimer F."/>
            <person name="Land M."/>
            <person name="Hauser L."/>
            <person name="Kyrpides N."/>
            <person name="Mikhailova N."/>
            <person name="Miller C.D."/>
            <person name="Anderson A.J."/>
            <person name="Sims R.C."/>
            <person name="Richardson P."/>
        </authorList>
    </citation>
    <scope>NUCLEOTIDE SEQUENCE [LARGE SCALE GENOMIC DNA]</scope>
    <source>
        <strain>JLS</strain>
    </source>
</reference>
<accession>A3PXU1</accession>
<dbReference type="EC" id="3.2.2.23" evidence="2"/>
<dbReference type="EC" id="4.2.99.18" evidence="2"/>
<dbReference type="EMBL" id="CP000580">
    <property type="protein sequence ID" value="ABN97718.1"/>
    <property type="molecule type" value="Genomic_DNA"/>
</dbReference>
<dbReference type="SMR" id="A3PXU1"/>
<dbReference type="KEGG" id="mjl:Mjls_1930"/>
<dbReference type="HOGENOM" id="CLU_038423_1_2_11"/>
<dbReference type="BioCyc" id="MSP164757:G1G8C-1950-MONOMER"/>
<dbReference type="GO" id="GO:0034039">
    <property type="term" value="F:8-oxo-7,8-dihydroguanine DNA N-glycosylase activity"/>
    <property type="evidence" value="ECO:0007669"/>
    <property type="project" value="TreeGrafter"/>
</dbReference>
<dbReference type="GO" id="GO:0140078">
    <property type="term" value="F:class I DNA-(apurinic or apyrimidinic site) endonuclease activity"/>
    <property type="evidence" value="ECO:0007669"/>
    <property type="project" value="UniProtKB-EC"/>
</dbReference>
<dbReference type="GO" id="GO:0003684">
    <property type="term" value="F:damaged DNA binding"/>
    <property type="evidence" value="ECO:0007669"/>
    <property type="project" value="InterPro"/>
</dbReference>
<dbReference type="GO" id="GO:0008270">
    <property type="term" value="F:zinc ion binding"/>
    <property type="evidence" value="ECO:0007669"/>
    <property type="project" value="UniProtKB-UniRule"/>
</dbReference>
<dbReference type="GO" id="GO:0006284">
    <property type="term" value="P:base-excision repair"/>
    <property type="evidence" value="ECO:0007669"/>
    <property type="project" value="InterPro"/>
</dbReference>
<dbReference type="CDD" id="cd08966">
    <property type="entry name" value="EcFpg-like_N"/>
    <property type="match status" value="1"/>
</dbReference>
<dbReference type="FunFam" id="1.10.8.50:FF:000003">
    <property type="entry name" value="Formamidopyrimidine-DNA glycosylase"/>
    <property type="match status" value="1"/>
</dbReference>
<dbReference type="FunFam" id="3.20.190.10:FF:000006">
    <property type="entry name" value="Formamidopyrimidine-DNA glycosylase"/>
    <property type="match status" value="1"/>
</dbReference>
<dbReference type="Gene3D" id="1.10.8.50">
    <property type="match status" value="1"/>
</dbReference>
<dbReference type="Gene3D" id="3.20.190.10">
    <property type="entry name" value="MutM-like, N-terminal"/>
    <property type="match status" value="1"/>
</dbReference>
<dbReference type="HAMAP" id="MF_00103">
    <property type="entry name" value="Fapy_DNA_glycosyl"/>
    <property type="match status" value="1"/>
</dbReference>
<dbReference type="InterPro" id="IPR015886">
    <property type="entry name" value="DNA_glyclase/AP_lyase_DNA-bd"/>
</dbReference>
<dbReference type="InterPro" id="IPR015887">
    <property type="entry name" value="DNA_glyclase_Znf_dom_DNA_BS"/>
</dbReference>
<dbReference type="InterPro" id="IPR020629">
    <property type="entry name" value="Formamido-pyr_DNA_Glyclase"/>
</dbReference>
<dbReference type="InterPro" id="IPR012319">
    <property type="entry name" value="FPG_cat"/>
</dbReference>
<dbReference type="InterPro" id="IPR035937">
    <property type="entry name" value="MutM-like_N-ter"/>
</dbReference>
<dbReference type="InterPro" id="IPR010979">
    <property type="entry name" value="Ribosomal_uS13-like_H2TH"/>
</dbReference>
<dbReference type="InterPro" id="IPR000214">
    <property type="entry name" value="Znf_DNA_glyclase/AP_lyase"/>
</dbReference>
<dbReference type="InterPro" id="IPR010663">
    <property type="entry name" value="Znf_FPG/IleRS"/>
</dbReference>
<dbReference type="NCBIfam" id="TIGR00577">
    <property type="entry name" value="fpg"/>
    <property type="match status" value="1"/>
</dbReference>
<dbReference type="NCBIfam" id="NF002211">
    <property type="entry name" value="PRK01103.1"/>
    <property type="match status" value="1"/>
</dbReference>
<dbReference type="PANTHER" id="PTHR22993">
    <property type="entry name" value="FORMAMIDOPYRIMIDINE-DNA GLYCOSYLASE"/>
    <property type="match status" value="1"/>
</dbReference>
<dbReference type="PANTHER" id="PTHR22993:SF9">
    <property type="entry name" value="FORMAMIDOPYRIMIDINE-DNA GLYCOSYLASE"/>
    <property type="match status" value="1"/>
</dbReference>
<dbReference type="Pfam" id="PF01149">
    <property type="entry name" value="Fapy_DNA_glyco"/>
    <property type="match status" value="1"/>
</dbReference>
<dbReference type="Pfam" id="PF06831">
    <property type="entry name" value="H2TH"/>
    <property type="match status" value="1"/>
</dbReference>
<dbReference type="Pfam" id="PF06827">
    <property type="entry name" value="zf-FPG_IleRS"/>
    <property type="match status" value="1"/>
</dbReference>
<dbReference type="SMART" id="SM00898">
    <property type="entry name" value="Fapy_DNA_glyco"/>
    <property type="match status" value="1"/>
</dbReference>
<dbReference type="SMART" id="SM01232">
    <property type="entry name" value="H2TH"/>
    <property type="match status" value="1"/>
</dbReference>
<dbReference type="SUPFAM" id="SSF57716">
    <property type="entry name" value="Glucocorticoid receptor-like (DNA-binding domain)"/>
    <property type="match status" value="1"/>
</dbReference>
<dbReference type="SUPFAM" id="SSF81624">
    <property type="entry name" value="N-terminal domain of MutM-like DNA repair proteins"/>
    <property type="match status" value="1"/>
</dbReference>
<dbReference type="SUPFAM" id="SSF46946">
    <property type="entry name" value="S13-like H2TH domain"/>
    <property type="match status" value="1"/>
</dbReference>
<dbReference type="PROSITE" id="PS51068">
    <property type="entry name" value="FPG_CAT"/>
    <property type="match status" value="1"/>
</dbReference>
<dbReference type="PROSITE" id="PS01242">
    <property type="entry name" value="ZF_FPG_1"/>
    <property type="match status" value="1"/>
</dbReference>
<dbReference type="PROSITE" id="PS51066">
    <property type="entry name" value="ZF_FPG_2"/>
    <property type="match status" value="1"/>
</dbReference>
<evidence type="ECO:0000250" key="1"/>
<evidence type="ECO:0000255" key="2">
    <source>
        <dbReference type="HAMAP-Rule" id="MF_00103"/>
    </source>
</evidence>
<name>FPG_MYCSJ</name>
<organism>
    <name type="scientific">Mycobacterium sp. (strain JLS)</name>
    <dbReference type="NCBI Taxonomy" id="164757"/>
    <lineage>
        <taxon>Bacteria</taxon>
        <taxon>Bacillati</taxon>
        <taxon>Actinomycetota</taxon>
        <taxon>Actinomycetes</taxon>
        <taxon>Mycobacteriales</taxon>
        <taxon>Mycobacteriaceae</taxon>
        <taxon>Mycobacterium</taxon>
    </lineage>
</organism>
<keyword id="KW-0227">DNA damage</keyword>
<keyword id="KW-0234">DNA repair</keyword>
<keyword id="KW-0238">DNA-binding</keyword>
<keyword id="KW-0326">Glycosidase</keyword>
<keyword id="KW-0378">Hydrolase</keyword>
<keyword id="KW-0456">Lyase</keyword>
<keyword id="KW-0479">Metal-binding</keyword>
<keyword id="KW-0511">Multifunctional enzyme</keyword>
<keyword id="KW-0862">Zinc</keyword>
<keyword id="KW-0863">Zinc-finger</keyword>
<comment type="function">
    <text evidence="2">Involved in base excision repair of DNA damaged by oxidation or by mutagenic agents. Acts as a DNA glycosylase that recognizes and removes damaged bases. Has a preference for oxidized purines, such as 7,8-dihydro-8-oxoguanine (8-oxoG). Has AP (apurinic/apyrimidinic) lyase activity and introduces nicks in the DNA strand. Cleaves the DNA backbone by beta-delta elimination to generate a single-strand break at the site of the removed base with both 3'- and 5'-phosphates.</text>
</comment>
<comment type="catalytic activity">
    <reaction evidence="2">
        <text>Hydrolysis of DNA containing ring-opened 7-methylguanine residues, releasing 2,6-diamino-4-hydroxy-5-(N-methyl)formamidopyrimidine.</text>
        <dbReference type="EC" id="3.2.2.23"/>
    </reaction>
</comment>
<comment type="catalytic activity">
    <reaction evidence="2">
        <text>2'-deoxyribonucleotide-(2'-deoxyribose 5'-phosphate)-2'-deoxyribonucleotide-DNA = a 3'-end 2'-deoxyribonucleotide-(2,3-dehydro-2,3-deoxyribose 5'-phosphate)-DNA + a 5'-end 5'-phospho-2'-deoxyribonucleoside-DNA + H(+)</text>
        <dbReference type="Rhea" id="RHEA:66592"/>
        <dbReference type="Rhea" id="RHEA-COMP:13180"/>
        <dbReference type="Rhea" id="RHEA-COMP:16897"/>
        <dbReference type="Rhea" id="RHEA-COMP:17067"/>
        <dbReference type="ChEBI" id="CHEBI:15378"/>
        <dbReference type="ChEBI" id="CHEBI:136412"/>
        <dbReference type="ChEBI" id="CHEBI:157695"/>
        <dbReference type="ChEBI" id="CHEBI:167181"/>
        <dbReference type="EC" id="4.2.99.18"/>
    </reaction>
</comment>
<comment type="cofactor">
    <cofactor evidence="2">
        <name>Zn(2+)</name>
        <dbReference type="ChEBI" id="CHEBI:29105"/>
    </cofactor>
    <text evidence="2">Binds 1 zinc ion per subunit.</text>
</comment>
<comment type="subunit">
    <text evidence="2">Monomer.</text>
</comment>
<comment type="similarity">
    <text evidence="2">Belongs to the FPG family.</text>
</comment>
<protein>
    <recommendedName>
        <fullName evidence="2">Formamidopyrimidine-DNA glycosylase</fullName>
        <shortName evidence="2">Fapy-DNA glycosylase</shortName>
        <ecNumber evidence="2">3.2.2.23</ecNumber>
    </recommendedName>
    <alternativeName>
        <fullName evidence="2">DNA-(apurinic or apyrimidinic site) lyase MutM</fullName>
        <shortName evidence="2">AP lyase MutM</shortName>
        <ecNumber evidence="2">4.2.99.18</ecNumber>
    </alternativeName>
</protein>
<proteinExistence type="inferred from homology"/>